<feature type="signal peptide" evidence="2">
    <location>
        <begin position="1"/>
        <end position="23"/>
    </location>
</feature>
<feature type="chain" id="PRO_0000017537" description="Snaclec 3">
    <location>
        <begin position="24"/>
        <end position="148"/>
    </location>
</feature>
<feature type="domain" description="C-type lectin" evidence="3">
    <location>
        <begin position="34"/>
        <end position="145"/>
    </location>
</feature>
<feature type="disulfide bond" evidence="3">
    <location>
        <begin position="27"/>
        <end position="38"/>
    </location>
</feature>
<feature type="disulfide bond" evidence="3">
    <location>
        <begin position="55"/>
        <end position="144"/>
    </location>
</feature>
<feature type="disulfide bond" description="Interchain" evidence="3">
    <location>
        <position position="100"/>
    </location>
</feature>
<feature type="disulfide bond" evidence="3">
    <location>
        <begin position="121"/>
        <end position="136"/>
    </location>
</feature>
<comment type="function">
    <text evidence="1">Interferes with one step of hemostasis (modulation of platelet aggregation, or coagulation cascade, for example).</text>
</comment>
<comment type="subunit">
    <text evidence="1">Heterodimer; disulfide-linked.</text>
</comment>
<comment type="subcellular location">
    <subcellularLocation>
        <location evidence="1">Secreted</location>
    </subcellularLocation>
</comment>
<comment type="similarity">
    <text evidence="4">Belongs to the snaclec family.</text>
</comment>
<organism>
    <name type="scientific">Daboia siamensis</name>
    <name type="common">Eastern Russel's viper</name>
    <name type="synonym">Daboia russelii siamensis</name>
    <dbReference type="NCBI Taxonomy" id="343250"/>
    <lineage>
        <taxon>Eukaryota</taxon>
        <taxon>Metazoa</taxon>
        <taxon>Chordata</taxon>
        <taxon>Craniata</taxon>
        <taxon>Vertebrata</taxon>
        <taxon>Euteleostomi</taxon>
        <taxon>Lepidosauria</taxon>
        <taxon>Squamata</taxon>
        <taxon>Bifurcata</taxon>
        <taxon>Unidentata</taxon>
        <taxon>Episquamata</taxon>
        <taxon>Toxicofera</taxon>
        <taxon>Serpentes</taxon>
        <taxon>Colubroidea</taxon>
        <taxon>Viperidae</taxon>
        <taxon>Viperinae</taxon>
        <taxon>Daboia</taxon>
    </lineage>
</organism>
<reference key="1">
    <citation type="submission" date="2005-05" db="EMBL/GenBank/DDBJ databases">
        <title>Molecular cloning and sequence analysis of cDNAs encoding seven C-type lectin-like protein subunits from Daboia russellii siamensis.</title>
        <authorList>
            <person name="Zhong S."/>
            <person name="Jin Y."/>
            <person name="Li D."/>
            <person name="Wang W."/>
            <person name="Xiong Y."/>
        </authorList>
    </citation>
    <scope>NUCLEOTIDE SEQUENCE [MRNA]</scope>
</reference>
<evidence type="ECO:0000250" key="1"/>
<evidence type="ECO:0000255" key="2"/>
<evidence type="ECO:0000255" key="3">
    <source>
        <dbReference type="PROSITE-ProRule" id="PRU00040"/>
    </source>
</evidence>
<evidence type="ECO:0000305" key="4"/>
<dbReference type="EMBL" id="DQ060416">
    <property type="protein sequence ID" value="AAY63872.1"/>
    <property type="molecule type" value="mRNA"/>
</dbReference>
<dbReference type="SMR" id="Q4PRD0"/>
<dbReference type="GO" id="GO:0005576">
    <property type="term" value="C:extracellular region"/>
    <property type="evidence" value="ECO:0007669"/>
    <property type="project" value="UniProtKB-SubCell"/>
</dbReference>
<dbReference type="GO" id="GO:0090729">
    <property type="term" value="F:toxin activity"/>
    <property type="evidence" value="ECO:0007669"/>
    <property type="project" value="UniProtKB-KW"/>
</dbReference>
<dbReference type="FunFam" id="3.10.100.10:FF:000087">
    <property type="entry name" value="Snaclec rhodocetin subunit delta"/>
    <property type="match status" value="1"/>
</dbReference>
<dbReference type="Gene3D" id="3.10.100.10">
    <property type="entry name" value="Mannose-Binding Protein A, subunit A"/>
    <property type="match status" value="1"/>
</dbReference>
<dbReference type="InterPro" id="IPR001304">
    <property type="entry name" value="C-type_lectin-like"/>
</dbReference>
<dbReference type="InterPro" id="IPR016186">
    <property type="entry name" value="C-type_lectin-like/link_sf"/>
</dbReference>
<dbReference type="InterPro" id="IPR050111">
    <property type="entry name" value="C-type_lectin/snaclec_domain"/>
</dbReference>
<dbReference type="InterPro" id="IPR016187">
    <property type="entry name" value="CTDL_fold"/>
</dbReference>
<dbReference type="PANTHER" id="PTHR22803">
    <property type="entry name" value="MANNOSE, PHOSPHOLIPASE, LECTIN RECEPTOR RELATED"/>
    <property type="match status" value="1"/>
</dbReference>
<dbReference type="Pfam" id="PF00059">
    <property type="entry name" value="Lectin_C"/>
    <property type="match status" value="1"/>
</dbReference>
<dbReference type="PRINTS" id="PR01504">
    <property type="entry name" value="PNCREATITSAP"/>
</dbReference>
<dbReference type="SMART" id="SM00034">
    <property type="entry name" value="CLECT"/>
    <property type="match status" value="1"/>
</dbReference>
<dbReference type="SUPFAM" id="SSF56436">
    <property type="entry name" value="C-type lectin-like"/>
    <property type="match status" value="1"/>
</dbReference>
<dbReference type="PROSITE" id="PS50041">
    <property type="entry name" value="C_TYPE_LECTIN_2"/>
    <property type="match status" value="1"/>
</dbReference>
<sequence>MGRFISVSFGLLVVFLSLSGTEAAFCCPSGWSAYDQNCYKVFTEEMNWADAEKFCTEQHKGSHLLSLHNIAEADFVLKKTLAMLKDGVIWMGLNDVWNECNWGWTDGAKLDYKAWNEGTNCFVFKIAKNHWSHMDCSSTHNFVCKFRV</sequence>
<proteinExistence type="evidence at transcript level"/>
<name>SL3_DABSI</name>
<keyword id="KW-1015">Disulfide bond</keyword>
<keyword id="KW-1199">Hemostasis impairing toxin</keyword>
<keyword id="KW-0964">Secreted</keyword>
<keyword id="KW-0732">Signal</keyword>
<keyword id="KW-0800">Toxin</keyword>
<accession>Q4PRD0</accession>
<protein>
    <recommendedName>
        <fullName>Snaclec 3</fullName>
    </recommendedName>
    <alternativeName>
        <fullName>C-type lectin-like 3</fullName>
    </alternativeName>
</protein>